<proteinExistence type="inferred from homology"/>
<sequence>MKNTVIALLALLASAGSLAATPWQKITQPIGGSAQSIGAFSNGCIVGAEALPLSAPGYQVMRTDQRRYFGHPDLVQFIQRLSNQVHNKGMGTVLIGDMGMPAGGRFNGGHASHQTGLDVDIFLQLPQTRWTSSQLLKPQALDLVASDGKHVVPSLWSPQISQLIKLAAEDSEVTRIFVNPAIKQQLCLDAGSDRQWLRKVRPWFQHRAHMHVRLRCPAGSLECEDQAPPPPGDGCGAELQSWFEPPKPGSTPPVKKTPPPLPPSCQALLDEHVL</sequence>
<name>MEPA_KLEP7</name>
<gene>
    <name evidence="1" type="primary">mepA</name>
    <name type="ordered locus">KPN78578_26740</name>
    <name type="ORF">KPN_02718</name>
</gene>
<organism>
    <name type="scientific">Klebsiella pneumoniae subsp. pneumoniae (strain ATCC 700721 / MGH 78578)</name>
    <dbReference type="NCBI Taxonomy" id="272620"/>
    <lineage>
        <taxon>Bacteria</taxon>
        <taxon>Pseudomonadati</taxon>
        <taxon>Pseudomonadota</taxon>
        <taxon>Gammaproteobacteria</taxon>
        <taxon>Enterobacterales</taxon>
        <taxon>Enterobacteriaceae</taxon>
        <taxon>Klebsiella/Raoultella group</taxon>
        <taxon>Klebsiella</taxon>
        <taxon>Klebsiella pneumoniae complex</taxon>
    </lineage>
</organism>
<reference key="1">
    <citation type="submission" date="2006-09" db="EMBL/GenBank/DDBJ databases">
        <authorList>
            <consortium name="The Klebsiella pneumonia Genome Sequencing Project"/>
            <person name="McClelland M."/>
            <person name="Sanderson E.K."/>
            <person name="Spieth J."/>
            <person name="Clifton W.S."/>
            <person name="Latreille P."/>
            <person name="Sabo A."/>
            <person name="Pepin K."/>
            <person name="Bhonagiri V."/>
            <person name="Porwollik S."/>
            <person name="Ali J."/>
            <person name="Wilson R.K."/>
        </authorList>
    </citation>
    <scope>NUCLEOTIDE SEQUENCE [LARGE SCALE GENOMIC DNA]</scope>
    <source>
        <strain>ATCC 700721 / MGH 78578</strain>
    </source>
</reference>
<dbReference type="EC" id="3.4.24.-" evidence="1"/>
<dbReference type="EMBL" id="CP000647">
    <property type="protein sequence ID" value="ABR78135.1"/>
    <property type="molecule type" value="Genomic_DNA"/>
</dbReference>
<dbReference type="RefSeq" id="WP_004174960.1">
    <property type="nucleotide sequence ID" value="NC_009648.1"/>
</dbReference>
<dbReference type="SMR" id="A6TC14"/>
<dbReference type="STRING" id="272620.KPN_02718"/>
<dbReference type="MEROPS" id="M74.001"/>
<dbReference type="PaxDb" id="272620-KPN_02718"/>
<dbReference type="EnsemblBacteria" id="ABR78135">
    <property type="protein sequence ID" value="ABR78135"/>
    <property type="gene ID" value="KPN_02718"/>
</dbReference>
<dbReference type="KEGG" id="kpn:KPN_02718"/>
<dbReference type="HOGENOM" id="CLU_052496_0_0_6"/>
<dbReference type="Proteomes" id="UP000000265">
    <property type="component" value="Chromosome"/>
</dbReference>
<dbReference type="GO" id="GO:0030288">
    <property type="term" value="C:outer membrane-bounded periplasmic space"/>
    <property type="evidence" value="ECO:0007669"/>
    <property type="project" value="InterPro"/>
</dbReference>
<dbReference type="GO" id="GO:0046872">
    <property type="term" value="F:metal ion binding"/>
    <property type="evidence" value="ECO:0007669"/>
    <property type="project" value="UniProtKB-KW"/>
</dbReference>
<dbReference type="GO" id="GO:0004222">
    <property type="term" value="F:metalloendopeptidase activity"/>
    <property type="evidence" value="ECO:0007669"/>
    <property type="project" value="UniProtKB-UniRule"/>
</dbReference>
<dbReference type="GO" id="GO:0004252">
    <property type="term" value="F:serine-type endopeptidase activity"/>
    <property type="evidence" value="ECO:0007669"/>
    <property type="project" value="InterPro"/>
</dbReference>
<dbReference type="GO" id="GO:0000270">
    <property type="term" value="P:peptidoglycan metabolic process"/>
    <property type="evidence" value="ECO:0007669"/>
    <property type="project" value="UniProtKB-UniRule"/>
</dbReference>
<dbReference type="GO" id="GO:0006508">
    <property type="term" value="P:proteolysis"/>
    <property type="evidence" value="ECO:0007669"/>
    <property type="project" value="UniProtKB-KW"/>
</dbReference>
<dbReference type="Gene3D" id="3.30.1380.10">
    <property type="match status" value="1"/>
</dbReference>
<dbReference type="HAMAP" id="MF_01623">
    <property type="entry name" value="MepA"/>
    <property type="match status" value="1"/>
</dbReference>
<dbReference type="InterPro" id="IPR009045">
    <property type="entry name" value="Hedgehog_sig/DD-Pept_Zn-bd_sf"/>
</dbReference>
<dbReference type="InterPro" id="IPR005073">
    <property type="entry name" value="Peptidase_M74"/>
</dbReference>
<dbReference type="NCBIfam" id="NF006947">
    <property type="entry name" value="PRK09429.1"/>
    <property type="match status" value="1"/>
</dbReference>
<dbReference type="Pfam" id="PF03411">
    <property type="entry name" value="Peptidase_M74"/>
    <property type="match status" value="1"/>
</dbReference>
<dbReference type="PIRSF" id="PIRSF018455">
    <property type="entry name" value="MepA"/>
    <property type="match status" value="1"/>
</dbReference>
<dbReference type="SUPFAM" id="SSF55166">
    <property type="entry name" value="Hedgehog/DD-peptidase"/>
    <property type="match status" value="1"/>
</dbReference>
<feature type="signal peptide" evidence="1">
    <location>
        <begin position="1"/>
        <end position="19"/>
    </location>
</feature>
<feature type="chain" id="PRO_1000069598" description="Penicillin-insensitive murein endopeptidase">
    <location>
        <begin position="20"/>
        <end position="274"/>
    </location>
</feature>
<feature type="region of interest" description="Disordered" evidence="2">
    <location>
        <begin position="224"/>
        <end position="263"/>
    </location>
</feature>
<feature type="compositionally biased region" description="Pro residues" evidence="2">
    <location>
        <begin position="245"/>
        <end position="263"/>
    </location>
</feature>
<feature type="binding site" evidence="1">
    <location>
        <position position="110"/>
    </location>
    <ligand>
        <name>Zn(2+)</name>
        <dbReference type="ChEBI" id="CHEBI:29105"/>
        <label>1</label>
    </ligand>
</feature>
<feature type="binding site" evidence="1">
    <location>
        <position position="113"/>
    </location>
    <ligand>
        <name>Zn(2+)</name>
        <dbReference type="ChEBI" id="CHEBI:29105"/>
        <label>1</label>
    </ligand>
</feature>
<feature type="binding site" evidence="1">
    <location>
        <position position="120"/>
    </location>
    <ligand>
        <name>Zn(2+)</name>
        <dbReference type="ChEBI" id="CHEBI:29105"/>
        <label>1</label>
    </ligand>
</feature>
<feature type="binding site" evidence="1">
    <location>
        <position position="147"/>
    </location>
    <ligand>
        <name>Zn(2+)</name>
        <dbReference type="ChEBI" id="CHEBI:29105"/>
        <label>2</label>
    </ligand>
</feature>
<feature type="binding site" evidence="1">
    <location>
        <position position="150"/>
    </location>
    <ligand>
        <name>Zn(2+)</name>
        <dbReference type="ChEBI" id="CHEBI:29105"/>
        <label>2</label>
    </ligand>
</feature>
<feature type="binding site" evidence="1">
    <location>
        <position position="211"/>
    </location>
    <ligand>
        <name>Zn(2+)</name>
        <dbReference type="ChEBI" id="CHEBI:29105"/>
        <label>1</label>
    </ligand>
</feature>
<feature type="disulfide bond" evidence="1">
    <location>
        <begin position="44"/>
        <end position="265"/>
    </location>
</feature>
<feature type="disulfide bond" evidence="1">
    <location>
        <begin position="187"/>
        <end position="235"/>
    </location>
</feature>
<feature type="disulfide bond" evidence="1">
    <location>
        <begin position="216"/>
        <end position="223"/>
    </location>
</feature>
<evidence type="ECO:0000255" key="1">
    <source>
        <dbReference type="HAMAP-Rule" id="MF_01623"/>
    </source>
</evidence>
<evidence type="ECO:0000256" key="2">
    <source>
        <dbReference type="SAM" id="MobiDB-lite"/>
    </source>
</evidence>
<comment type="function">
    <text evidence="1">Murein endopeptidase that cleaves the D-alanyl-meso-2,6-diamino-pimelyl amide bond that connects peptidoglycan strands. Likely plays a role in the removal of murein from the sacculus.</text>
</comment>
<comment type="cofactor">
    <cofactor evidence="1">
        <name>Zn(2+)</name>
        <dbReference type="ChEBI" id="CHEBI:29105"/>
    </cofactor>
    <text evidence="1">Binds 2 Zn(2+) ions per subunit. Zn(2+) ion 1 is bound in the active site. Zn(2+) ion 2 is bound at the dimer interface by residues from both subunits.</text>
</comment>
<comment type="subunit">
    <text evidence="1">Dimer.</text>
</comment>
<comment type="subcellular location">
    <subcellularLocation>
        <location evidence="1">Periplasm</location>
    </subcellularLocation>
</comment>
<comment type="similarity">
    <text evidence="1">Belongs to the peptidase M74 family.</text>
</comment>
<protein>
    <recommendedName>
        <fullName evidence="1">Penicillin-insensitive murein endopeptidase</fullName>
        <ecNumber evidence="1">3.4.24.-</ecNumber>
    </recommendedName>
    <alternativeName>
        <fullName evidence="1">D-alanyl-D-alanine-endopeptidase</fullName>
        <shortName evidence="1">DD-endopeptidase</shortName>
    </alternativeName>
</protein>
<accession>A6TC14</accession>
<keyword id="KW-1015">Disulfide bond</keyword>
<keyword id="KW-0378">Hydrolase</keyword>
<keyword id="KW-0479">Metal-binding</keyword>
<keyword id="KW-0482">Metalloprotease</keyword>
<keyword id="KW-0574">Periplasm</keyword>
<keyword id="KW-0645">Protease</keyword>
<keyword id="KW-0732">Signal</keyword>
<keyword id="KW-0862">Zinc</keyword>